<organism>
    <name type="scientific">Syntrophomonas wolfei subsp. wolfei (strain DSM 2245B / Goettingen)</name>
    <dbReference type="NCBI Taxonomy" id="335541"/>
    <lineage>
        <taxon>Bacteria</taxon>
        <taxon>Bacillati</taxon>
        <taxon>Bacillota</taxon>
        <taxon>Clostridia</taxon>
        <taxon>Eubacteriales</taxon>
        <taxon>Syntrophomonadaceae</taxon>
        <taxon>Syntrophomonas</taxon>
    </lineage>
</organism>
<dbReference type="EC" id="5.3.1.23" evidence="1"/>
<dbReference type="EMBL" id="CP000448">
    <property type="protein sequence ID" value="ABI68100.1"/>
    <property type="molecule type" value="Genomic_DNA"/>
</dbReference>
<dbReference type="RefSeq" id="WP_011640205.1">
    <property type="nucleotide sequence ID" value="NC_008346.1"/>
</dbReference>
<dbReference type="SMR" id="Q0AYV4"/>
<dbReference type="STRING" id="335541.Swol_0779"/>
<dbReference type="KEGG" id="swo:Swol_0779"/>
<dbReference type="eggNOG" id="COG0182">
    <property type="taxonomic scope" value="Bacteria"/>
</dbReference>
<dbReference type="HOGENOM" id="CLU_016218_1_2_9"/>
<dbReference type="OrthoDB" id="9803436at2"/>
<dbReference type="UniPathway" id="UPA00904">
    <property type="reaction ID" value="UER00874"/>
</dbReference>
<dbReference type="Proteomes" id="UP000001968">
    <property type="component" value="Chromosome"/>
</dbReference>
<dbReference type="GO" id="GO:0046523">
    <property type="term" value="F:S-methyl-5-thioribose-1-phosphate isomerase activity"/>
    <property type="evidence" value="ECO:0007669"/>
    <property type="project" value="UniProtKB-UniRule"/>
</dbReference>
<dbReference type="GO" id="GO:0019509">
    <property type="term" value="P:L-methionine salvage from methylthioadenosine"/>
    <property type="evidence" value="ECO:0007669"/>
    <property type="project" value="UniProtKB-UniRule"/>
</dbReference>
<dbReference type="FunFam" id="1.20.120.420:FF:000003">
    <property type="entry name" value="Methylthioribose-1-phosphate isomerase"/>
    <property type="match status" value="1"/>
</dbReference>
<dbReference type="FunFam" id="3.40.50.10470:FF:000006">
    <property type="entry name" value="Methylthioribose-1-phosphate isomerase"/>
    <property type="match status" value="1"/>
</dbReference>
<dbReference type="Gene3D" id="1.20.120.420">
    <property type="entry name" value="translation initiation factor eif-2b, domain 1"/>
    <property type="match status" value="1"/>
</dbReference>
<dbReference type="Gene3D" id="3.40.50.10470">
    <property type="entry name" value="Translation initiation factor eif-2b, domain 2"/>
    <property type="match status" value="1"/>
</dbReference>
<dbReference type="HAMAP" id="MF_01678">
    <property type="entry name" value="Salvage_MtnA"/>
    <property type="match status" value="1"/>
</dbReference>
<dbReference type="InterPro" id="IPR000649">
    <property type="entry name" value="IF-2B-related"/>
</dbReference>
<dbReference type="InterPro" id="IPR005251">
    <property type="entry name" value="IF-M1Pi"/>
</dbReference>
<dbReference type="InterPro" id="IPR042529">
    <property type="entry name" value="IF_2B-like_C"/>
</dbReference>
<dbReference type="InterPro" id="IPR011559">
    <property type="entry name" value="Initiation_fac_2B_a/b/d"/>
</dbReference>
<dbReference type="InterPro" id="IPR027363">
    <property type="entry name" value="M1Pi_N"/>
</dbReference>
<dbReference type="InterPro" id="IPR037171">
    <property type="entry name" value="NagB/RpiA_transferase-like"/>
</dbReference>
<dbReference type="NCBIfam" id="TIGR00524">
    <property type="entry name" value="eIF-2B_rel"/>
    <property type="match status" value="1"/>
</dbReference>
<dbReference type="NCBIfam" id="NF004326">
    <property type="entry name" value="PRK05720.1"/>
    <property type="match status" value="1"/>
</dbReference>
<dbReference type="NCBIfam" id="TIGR00512">
    <property type="entry name" value="salvage_mtnA"/>
    <property type="match status" value="1"/>
</dbReference>
<dbReference type="PANTHER" id="PTHR43475">
    <property type="entry name" value="METHYLTHIORIBOSE-1-PHOSPHATE ISOMERASE"/>
    <property type="match status" value="1"/>
</dbReference>
<dbReference type="PANTHER" id="PTHR43475:SF1">
    <property type="entry name" value="METHYLTHIORIBOSE-1-PHOSPHATE ISOMERASE"/>
    <property type="match status" value="1"/>
</dbReference>
<dbReference type="Pfam" id="PF01008">
    <property type="entry name" value="IF-2B"/>
    <property type="match status" value="1"/>
</dbReference>
<dbReference type="SUPFAM" id="SSF100950">
    <property type="entry name" value="NagB/RpiA/CoA transferase-like"/>
    <property type="match status" value="1"/>
</dbReference>
<accession>Q0AYV4</accession>
<feature type="chain" id="PRO_0000357254" description="Methylthioribose-1-phosphate isomerase">
    <location>
        <begin position="1"/>
        <end position="346"/>
    </location>
</feature>
<feature type="active site" description="Proton donor" evidence="1">
    <location>
        <position position="235"/>
    </location>
</feature>
<feature type="binding site" evidence="1">
    <location>
        <begin position="45"/>
        <end position="47"/>
    </location>
    <ligand>
        <name>substrate</name>
    </ligand>
</feature>
<feature type="binding site" evidence="1">
    <location>
        <position position="87"/>
    </location>
    <ligand>
        <name>substrate</name>
    </ligand>
</feature>
<feature type="binding site" evidence="1">
    <location>
        <position position="194"/>
    </location>
    <ligand>
        <name>substrate</name>
    </ligand>
</feature>
<feature type="binding site" evidence="1">
    <location>
        <begin position="245"/>
        <end position="246"/>
    </location>
    <ligand>
        <name>substrate</name>
    </ligand>
</feature>
<feature type="site" description="Transition state stabilizer" evidence="1">
    <location>
        <position position="155"/>
    </location>
</feature>
<comment type="function">
    <text evidence="1">Catalyzes the interconversion of methylthioribose-1-phosphate (MTR-1-P) into methylthioribulose-1-phosphate (MTRu-1-P).</text>
</comment>
<comment type="catalytic activity">
    <reaction evidence="1">
        <text>5-(methylsulfanyl)-alpha-D-ribose 1-phosphate = 5-(methylsulfanyl)-D-ribulose 1-phosphate</text>
        <dbReference type="Rhea" id="RHEA:19989"/>
        <dbReference type="ChEBI" id="CHEBI:58533"/>
        <dbReference type="ChEBI" id="CHEBI:58548"/>
        <dbReference type="EC" id="5.3.1.23"/>
    </reaction>
</comment>
<comment type="pathway">
    <text evidence="1">Amino-acid biosynthesis; L-methionine biosynthesis via salvage pathway; L-methionine from S-methyl-5-thio-alpha-D-ribose 1-phosphate: step 1/6.</text>
</comment>
<comment type="similarity">
    <text evidence="2">Belongs to the eIF-2B alpha/beta/delta subunits family. MtnA subfamily.</text>
</comment>
<proteinExistence type="inferred from homology"/>
<reference key="1">
    <citation type="journal article" date="2010" name="Environ. Microbiol.">
        <title>The genome of Syntrophomonas wolfei: new insights into syntrophic metabolism and biohydrogen production.</title>
        <authorList>
            <person name="Sieber J.R."/>
            <person name="Sims D.R."/>
            <person name="Han C."/>
            <person name="Kim E."/>
            <person name="Lykidis A."/>
            <person name="Lapidus A.L."/>
            <person name="McDonnald E."/>
            <person name="Rohlin L."/>
            <person name="Culley D.E."/>
            <person name="Gunsalus R."/>
            <person name="McInerney M.J."/>
        </authorList>
    </citation>
    <scope>NUCLEOTIDE SEQUENCE [LARGE SCALE GENOMIC DNA]</scope>
    <source>
        <strain>DSM 2245B / Goettingen</strain>
    </source>
</reference>
<gene>
    <name evidence="1" type="primary">mtnA</name>
    <name type="ordered locus">Swol_0779</name>
</gene>
<evidence type="ECO:0000255" key="1">
    <source>
        <dbReference type="HAMAP-Rule" id="MF_01678"/>
    </source>
</evidence>
<evidence type="ECO:0000305" key="2"/>
<sequence length="346" mass="38322">MIRNLYYEEQALMILNQNCLPEELVYERCERPEEVVAAIKGLKVRGAPLIGVTAAFGLAMAFSGYSGTGEARDVYFSRMKELFAATRPTAVNLFWALERMERVYRENHHLSPEELARRLCQEAQNLYKEDIRVNEAIGEQGQELLGEGSRVMTICNAGALATCGYGTALGVIRSAARRNKIEMVWACETRPVLQGSRLTVWELWQDKIPVTLLTDNMAGYTMSLGKVDAVITGADRIATNGDTANKIGTYSLAVLAKYHGIPFYVAAPLSTFDWNIKQGGEIPIEERSAEEVRTIKGSCLTVPVVDVFNPAFDITPEHLITAIICEKGIIRPPFGAAIKIWGREGE</sequence>
<protein>
    <recommendedName>
        <fullName evidence="1">Methylthioribose-1-phosphate isomerase</fullName>
        <shortName evidence="1">M1Pi</shortName>
        <shortName evidence="1">MTR-1-P isomerase</shortName>
        <ecNumber evidence="1">5.3.1.23</ecNumber>
    </recommendedName>
    <alternativeName>
        <fullName evidence="1">S-methyl-5-thioribose-1-phosphate isomerase</fullName>
    </alternativeName>
</protein>
<name>MTNA_SYNWW</name>
<keyword id="KW-0028">Amino-acid biosynthesis</keyword>
<keyword id="KW-0413">Isomerase</keyword>
<keyword id="KW-0486">Methionine biosynthesis</keyword>
<keyword id="KW-1185">Reference proteome</keyword>